<evidence type="ECO:0000255" key="1">
    <source>
        <dbReference type="HAMAP-Rule" id="MF_00315"/>
    </source>
</evidence>
<protein>
    <recommendedName>
        <fullName evidence="1">1-deoxy-D-xylulose-5-phosphate synthase</fullName>
        <ecNumber evidence="1">2.2.1.7</ecNumber>
    </recommendedName>
    <alternativeName>
        <fullName evidence="1">1-deoxyxylulose-5-phosphate synthase</fullName>
        <shortName evidence="1">DXP synthase</shortName>
        <shortName evidence="1">DXPS</shortName>
    </alternativeName>
</protein>
<proteinExistence type="inferred from homology"/>
<sequence>MSLDLQHYPTLALAQTPDKLRQLPQDKLRELADELREYLLNSVSQTSGHFASGLGTVELTVALHYVYNTPFDRLLWDVGHQAYPHKILTGRAERMSTIRQKNGLHPFPWPPESEYDTFAVGHSSTSISAALGMAVAAEKEGKDRKVVSVIGDGAMTAGMAFEALNHAGDIKKDMVVVLNDNEMSISENVGALNSHLARLLTGNFFNSIRDGGKKLLSNVPPIKEFASRAEEHLKGMVVPGTIFEELGFNYIGPIDGHDVNAVVDTLRNMRNFDGPQLLHVVTKKGKGYAVAEEDPIKFHAVPKFNPADNALPKSKPSAPTYSAIFGQWLCDMAAQDPKLMAVTPAMREGSGMVEFSQRFPEQYFDVAIAEQHAVTFGAGLAKDGMNAVVAIYSSFLQRAYDQLIHDVAIQDLPVLFAIDRAGIVGADGPTHQGAFDIAFLRCIPNMVVMAPSDENECRQMLYTGHKLQKPAAVRYPRGAGMGVTPDEAMTALEIGKSRTCRETAKDKSESVAILNFGCLLPYALEAAVAIDATVIDMRFIKPLDGDAVLKAANEHSALITLEDGCIMGGAGSAVLEHLQQNGVLKAVKMLGLPDSFILQGTQQEMYKEHGLDAEGIIAAAKSLIG</sequence>
<dbReference type="EC" id="2.2.1.7" evidence="1"/>
<dbReference type="EMBL" id="CP001103">
    <property type="protein sequence ID" value="AEA98619.1"/>
    <property type="molecule type" value="Genomic_DNA"/>
</dbReference>
<dbReference type="RefSeq" id="WP_012518937.1">
    <property type="nucleotide sequence ID" value="NC_011138.3"/>
</dbReference>
<dbReference type="SMR" id="B4RVY8"/>
<dbReference type="KEGG" id="amc:MADE_1012415"/>
<dbReference type="HOGENOM" id="CLU_009227_1_4_6"/>
<dbReference type="UniPathway" id="UPA00064">
    <property type="reaction ID" value="UER00091"/>
</dbReference>
<dbReference type="Proteomes" id="UP000001870">
    <property type="component" value="Chromosome"/>
</dbReference>
<dbReference type="GO" id="GO:0005829">
    <property type="term" value="C:cytosol"/>
    <property type="evidence" value="ECO:0007669"/>
    <property type="project" value="TreeGrafter"/>
</dbReference>
<dbReference type="GO" id="GO:0008661">
    <property type="term" value="F:1-deoxy-D-xylulose-5-phosphate synthase activity"/>
    <property type="evidence" value="ECO:0007669"/>
    <property type="project" value="UniProtKB-UniRule"/>
</dbReference>
<dbReference type="GO" id="GO:0000287">
    <property type="term" value="F:magnesium ion binding"/>
    <property type="evidence" value="ECO:0007669"/>
    <property type="project" value="UniProtKB-UniRule"/>
</dbReference>
<dbReference type="GO" id="GO:0030976">
    <property type="term" value="F:thiamine pyrophosphate binding"/>
    <property type="evidence" value="ECO:0007669"/>
    <property type="project" value="UniProtKB-UniRule"/>
</dbReference>
<dbReference type="GO" id="GO:0052865">
    <property type="term" value="P:1-deoxy-D-xylulose 5-phosphate biosynthetic process"/>
    <property type="evidence" value="ECO:0007669"/>
    <property type="project" value="UniProtKB-UniPathway"/>
</dbReference>
<dbReference type="GO" id="GO:0019288">
    <property type="term" value="P:isopentenyl diphosphate biosynthetic process, methylerythritol 4-phosphate pathway"/>
    <property type="evidence" value="ECO:0007669"/>
    <property type="project" value="TreeGrafter"/>
</dbReference>
<dbReference type="GO" id="GO:0016114">
    <property type="term" value="P:terpenoid biosynthetic process"/>
    <property type="evidence" value="ECO:0007669"/>
    <property type="project" value="UniProtKB-UniRule"/>
</dbReference>
<dbReference type="GO" id="GO:0009228">
    <property type="term" value="P:thiamine biosynthetic process"/>
    <property type="evidence" value="ECO:0007669"/>
    <property type="project" value="UniProtKB-UniRule"/>
</dbReference>
<dbReference type="CDD" id="cd02007">
    <property type="entry name" value="TPP_DXS"/>
    <property type="match status" value="1"/>
</dbReference>
<dbReference type="CDD" id="cd07033">
    <property type="entry name" value="TPP_PYR_DXS_TK_like"/>
    <property type="match status" value="1"/>
</dbReference>
<dbReference type="FunFam" id="3.40.50.920:FF:000002">
    <property type="entry name" value="1-deoxy-D-xylulose-5-phosphate synthase"/>
    <property type="match status" value="1"/>
</dbReference>
<dbReference type="FunFam" id="3.40.50.970:FF:000005">
    <property type="entry name" value="1-deoxy-D-xylulose-5-phosphate synthase"/>
    <property type="match status" value="1"/>
</dbReference>
<dbReference type="Gene3D" id="3.40.50.920">
    <property type="match status" value="1"/>
</dbReference>
<dbReference type="Gene3D" id="3.40.50.970">
    <property type="match status" value="2"/>
</dbReference>
<dbReference type="HAMAP" id="MF_00315">
    <property type="entry name" value="DXP_synth"/>
    <property type="match status" value="1"/>
</dbReference>
<dbReference type="InterPro" id="IPR005477">
    <property type="entry name" value="Dxylulose-5-P_synthase"/>
</dbReference>
<dbReference type="InterPro" id="IPR029061">
    <property type="entry name" value="THDP-binding"/>
</dbReference>
<dbReference type="InterPro" id="IPR009014">
    <property type="entry name" value="Transketo_C/PFOR_II"/>
</dbReference>
<dbReference type="InterPro" id="IPR005475">
    <property type="entry name" value="Transketolase-like_Pyr-bd"/>
</dbReference>
<dbReference type="InterPro" id="IPR020826">
    <property type="entry name" value="Transketolase_BS"/>
</dbReference>
<dbReference type="InterPro" id="IPR033248">
    <property type="entry name" value="Transketolase_C"/>
</dbReference>
<dbReference type="InterPro" id="IPR049557">
    <property type="entry name" value="Transketolase_CS"/>
</dbReference>
<dbReference type="NCBIfam" id="TIGR00204">
    <property type="entry name" value="dxs"/>
    <property type="match status" value="1"/>
</dbReference>
<dbReference type="NCBIfam" id="NF003933">
    <property type="entry name" value="PRK05444.2-2"/>
    <property type="match status" value="1"/>
</dbReference>
<dbReference type="PANTHER" id="PTHR43322">
    <property type="entry name" value="1-D-DEOXYXYLULOSE 5-PHOSPHATE SYNTHASE-RELATED"/>
    <property type="match status" value="1"/>
</dbReference>
<dbReference type="PANTHER" id="PTHR43322:SF5">
    <property type="entry name" value="1-DEOXY-D-XYLULOSE-5-PHOSPHATE SYNTHASE, CHLOROPLASTIC"/>
    <property type="match status" value="1"/>
</dbReference>
<dbReference type="Pfam" id="PF13292">
    <property type="entry name" value="DXP_synthase_N"/>
    <property type="match status" value="1"/>
</dbReference>
<dbReference type="Pfam" id="PF02779">
    <property type="entry name" value="Transket_pyr"/>
    <property type="match status" value="1"/>
</dbReference>
<dbReference type="Pfam" id="PF02780">
    <property type="entry name" value="Transketolase_C"/>
    <property type="match status" value="1"/>
</dbReference>
<dbReference type="SMART" id="SM00861">
    <property type="entry name" value="Transket_pyr"/>
    <property type="match status" value="1"/>
</dbReference>
<dbReference type="SUPFAM" id="SSF52518">
    <property type="entry name" value="Thiamin diphosphate-binding fold (THDP-binding)"/>
    <property type="match status" value="2"/>
</dbReference>
<dbReference type="SUPFAM" id="SSF52922">
    <property type="entry name" value="TK C-terminal domain-like"/>
    <property type="match status" value="1"/>
</dbReference>
<dbReference type="PROSITE" id="PS00801">
    <property type="entry name" value="TRANSKETOLASE_1"/>
    <property type="match status" value="1"/>
</dbReference>
<dbReference type="PROSITE" id="PS00802">
    <property type="entry name" value="TRANSKETOLASE_2"/>
    <property type="match status" value="1"/>
</dbReference>
<reference key="1">
    <citation type="journal article" date="2008" name="ISME J.">
        <title>Comparative genomics of two ecotypes of the marine planktonic copiotroph Alteromonas macleodii suggests alternative lifestyles associated with different kinds of particulate organic matter.</title>
        <authorList>
            <person name="Ivars-Martinez E."/>
            <person name="Martin-Cuadrado A.-B."/>
            <person name="D'Auria G."/>
            <person name="Mira A."/>
            <person name="Ferriera S."/>
            <person name="Johnson J."/>
            <person name="Friedman R."/>
            <person name="Rodriguez-Valera F."/>
        </authorList>
    </citation>
    <scope>NUCLEOTIDE SEQUENCE [LARGE SCALE GENOMIC DNA]</scope>
    <source>
        <strain>DSM 17117 / CIP 110805 / LMG 28347 / Deep ecotype</strain>
    </source>
</reference>
<comment type="function">
    <text evidence="1">Catalyzes the acyloin condensation reaction between C atoms 2 and 3 of pyruvate and glyceraldehyde 3-phosphate to yield 1-deoxy-D-xylulose-5-phosphate (DXP).</text>
</comment>
<comment type="catalytic activity">
    <reaction evidence="1">
        <text>D-glyceraldehyde 3-phosphate + pyruvate + H(+) = 1-deoxy-D-xylulose 5-phosphate + CO2</text>
        <dbReference type="Rhea" id="RHEA:12605"/>
        <dbReference type="ChEBI" id="CHEBI:15361"/>
        <dbReference type="ChEBI" id="CHEBI:15378"/>
        <dbReference type="ChEBI" id="CHEBI:16526"/>
        <dbReference type="ChEBI" id="CHEBI:57792"/>
        <dbReference type="ChEBI" id="CHEBI:59776"/>
        <dbReference type="EC" id="2.2.1.7"/>
    </reaction>
</comment>
<comment type="cofactor">
    <cofactor evidence="1">
        <name>Mg(2+)</name>
        <dbReference type="ChEBI" id="CHEBI:18420"/>
    </cofactor>
    <text evidence="1">Binds 1 Mg(2+) ion per subunit.</text>
</comment>
<comment type="cofactor">
    <cofactor evidence="1">
        <name>thiamine diphosphate</name>
        <dbReference type="ChEBI" id="CHEBI:58937"/>
    </cofactor>
    <text evidence="1">Binds 1 thiamine pyrophosphate per subunit.</text>
</comment>
<comment type="pathway">
    <text evidence="1">Metabolic intermediate biosynthesis; 1-deoxy-D-xylulose 5-phosphate biosynthesis; 1-deoxy-D-xylulose 5-phosphate from D-glyceraldehyde 3-phosphate and pyruvate: step 1/1.</text>
</comment>
<comment type="subunit">
    <text evidence="1">Homodimer.</text>
</comment>
<comment type="similarity">
    <text evidence="1">Belongs to the transketolase family. DXPS subfamily.</text>
</comment>
<organism>
    <name type="scientific">Alteromonas mediterranea (strain DSM 17117 / CIP 110805 / LMG 28347 / Deep ecotype)</name>
    <dbReference type="NCBI Taxonomy" id="1774373"/>
    <lineage>
        <taxon>Bacteria</taxon>
        <taxon>Pseudomonadati</taxon>
        <taxon>Pseudomonadota</taxon>
        <taxon>Gammaproteobacteria</taxon>
        <taxon>Alteromonadales</taxon>
        <taxon>Alteromonadaceae</taxon>
        <taxon>Alteromonas/Salinimonas group</taxon>
        <taxon>Alteromonas</taxon>
    </lineage>
</organism>
<gene>
    <name evidence="1" type="primary">dxs</name>
    <name type="ordered locus">MADE_1012415</name>
</gene>
<accession>B4RVY8</accession>
<accession>F2G6Y5</accession>
<keyword id="KW-0414">Isoprene biosynthesis</keyword>
<keyword id="KW-0460">Magnesium</keyword>
<keyword id="KW-0479">Metal-binding</keyword>
<keyword id="KW-0784">Thiamine biosynthesis</keyword>
<keyword id="KW-0786">Thiamine pyrophosphate</keyword>
<keyword id="KW-0808">Transferase</keyword>
<feature type="chain" id="PRO_1000115718" description="1-deoxy-D-xylulose-5-phosphate synthase">
    <location>
        <begin position="1"/>
        <end position="625"/>
    </location>
</feature>
<feature type="binding site" evidence="1">
    <location>
        <position position="80"/>
    </location>
    <ligand>
        <name>thiamine diphosphate</name>
        <dbReference type="ChEBI" id="CHEBI:58937"/>
    </ligand>
</feature>
<feature type="binding site" evidence="1">
    <location>
        <begin position="121"/>
        <end position="123"/>
    </location>
    <ligand>
        <name>thiamine diphosphate</name>
        <dbReference type="ChEBI" id="CHEBI:58937"/>
    </ligand>
</feature>
<feature type="binding site" evidence="1">
    <location>
        <position position="152"/>
    </location>
    <ligand>
        <name>Mg(2+)</name>
        <dbReference type="ChEBI" id="CHEBI:18420"/>
    </ligand>
</feature>
<feature type="binding site" evidence="1">
    <location>
        <begin position="153"/>
        <end position="154"/>
    </location>
    <ligand>
        <name>thiamine diphosphate</name>
        <dbReference type="ChEBI" id="CHEBI:58937"/>
    </ligand>
</feature>
<feature type="binding site" evidence="1">
    <location>
        <position position="181"/>
    </location>
    <ligand>
        <name>Mg(2+)</name>
        <dbReference type="ChEBI" id="CHEBI:18420"/>
    </ligand>
</feature>
<feature type="binding site" evidence="1">
    <location>
        <position position="181"/>
    </location>
    <ligand>
        <name>thiamine diphosphate</name>
        <dbReference type="ChEBI" id="CHEBI:58937"/>
    </ligand>
</feature>
<feature type="binding site" evidence="1">
    <location>
        <position position="288"/>
    </location>
    <ligand>
        <name>thiamine diphosphate</name>
        <dbReference type="ChEBI" id="CHEBI:58937"/>
    </ligand>
</feature>
<feature type="binding site" evidence="1">
    <location>
        <position position="370"/>
    </location>
    <ligand>
        <name>thiamine diphosphate</name>
        <dbReference type="ChEBI" id="CHEBI:58937"/>
    </ligand>
</feature>
<name>DXS_ALTMD</name>